<protein>
    <recommendedName>
        <fullName evidence="1">NADPH-dependent 7-cyano-7-deazaguanine reductase</fullName>
        <ecNumber evidence="1">1.7.1.13</ecNumber>
    </recommendedName>
    <alternativeName>
        <fullName evidence="1">7-cyano-7-carbaguanine reductase</fullName>
    </alternativeName>
    <alternativeName>
        <fullName evidence="1">NADPH-dependent nitrile oxidoreductase</fullName>
    </alternativeName>
    <alternativeName>
        <fullName evidence="1">PreQ(0) reductase</fullName>
    </alternativeName>
</protein>
<feature type="chain" id="PRO_1000062388" description="NADPH-dependent 7-cyano-7-deazaguanine reductase">
    <location>
        <begin position="1"/>
        <end position="148"/>
    </location>
</feature>
<feature type="active site" description="Thioimide intermediate" evidence="1">
    <location>
        <position position="50"/>
    </location>
</feature>
<feature type="active site" description="Proton donor" evidence="1">
    <location>
        <position position="57"/>
    </location>
</feature>
<feature type="binding site" evidence="1">
    <location>
        <begin position="72"/>
        <end position="74"/>
    </location>
    <ligand>
        <name>substrate</name>
    </ligand>
</feature>
<feature type="binding site" evidence="1">
    <location>
        <begin position="91"/>
        <end position="92"/>
    </location>
    <ligand>
        <name>substrate</name>
    </ligand>
</feature>
<evidence type="ECO:0000255" key="1">
    <source>
        <dbReference type="HAMAP-Rule" id="MF_00818"/>
    </source>
</evidence>
<reference key="1">
    <citation type="journal article" date="2006" name="Proc. Natl. Acad. Sci. U.S.A.">
        <title>The complete genome sequence of a chronic atrophic gastritis Helicobacter pylori strain: evolution during disease progression.</title>
        <authorList>
            <person name="Oh J.D."/>
            <person name="Kling-Baeckhed H."/>
            <person name="Giannakis M."/>
            <person name="Xu J."/>
            <person name="Fulton R.S."/>
            <person name="Fulton L.A."/>
            <person name="Cordum H.S."/>
            <person name="Wang C."/>
            <person name="Elliott G."/>
            <person name="Edwards J."/>
            <person name="Mardis E.R."/>
            <person name="Engstrand L.G."/>
            <person name="Gordon J.I."/>
        </authorList>
    </citation>
    <scope>NUCLEOTIDE SEQUENCE [LARGE SCALE GENOMIC DNA]</scope>
    <source>
        <strain>HPAG1</strain>
    </source>
</reference>
<accession>Q1CRL6</accession>
<organism>
    <name type="scientific">Helicobacter pylori (strain HPAG1)</name>
    <dbReference type="NCBI Taxonomy" id="357544"/>
    <lineage>
        <taxon>Bacteria</taxon>
        <taxon>Pseudomonadati</taxon>
        <taxon>Campylobacterota</taxon>
        <taxon>Epsilonproteobacteria</taxon>
        <taxon>Campylobacterales</taxon>
        <taxon>Helicobacteraceae</taxon>
        <taxon>Helicobacter</taxon>
    </lineage>
</organism>
<dbReference type="EC" id="1.7.1.13" evidence="1"/>
<dbReference type="EMBL" id="CP000241">
    <property type="protein sequence ID" value="ABF85406.1"/>
    <property type="molecule type" value="Genomic_DNA"/>
</dbReference>
<dbReference type="RefSeq" id="WP_000187128.1">
    <property type="nucleotide sequence ID" value="NC_008086.1"/>
</dbReference>
<dbReference type="SMR" id="Q1CRL6"/>
<dbReference type="KEGG" id="hpa:HPAG1_1339"/>
<dbReference type="HOGENOM" id="CLU_102489_0_1_7"/>
<dbReference type="UniPathway" id="UPA00392"/>
<dbReference type="GO" id="GO:0005737">
    <property type="term" value="C:cytoplasm"/>
    <property type="evidence" value="ECO:0007669"/>
    <property type="project" value="UniProtKB-SubCell"/>
</dbReference>
<dbReference type="GO" id="GO:0033739">
    <property type="term" value="F:preQ1 synthase activity"/>
    <property type="evidence" value="ECO:0007669"/>
    <property type="project" value="UniProtKB-UniRule"/>
</dbReference>
<dbReference type="GO" id="GO:0008616">
    <property type="term" value="P:queuosine biosynthetic process"/>
    <property type="evidence" value="ECO:0007669"/>
    <property type="project" value="UniProtKB-UniRule"/>
</dbReference>
<dbReference type="GO" id="GO:0006400">
    <property type="term" value="P:tRNA modification"/>
    <property type="evidence" value="ECO:0007669"/>
    <property type="project" value="UniProtKB-UniRule"/>
</dbReference>
<dbReference type="Gene3D" id="3.30.1130.10">
    <property type="match status" value="1"/>
</dbReference>
<dbReference type="HAMAP" id="MF_00818">
    <property type="entry name" value="QueF_type1"/>
    <property type="match status" value="1"/>
</dbReference>
<dbReference type="InterPro" id="IPR043133">
    <property type="entry name" value="GTP-CH-I_C/QueF"/>
</dbReference>
<dbReference type="InterPro" id="IPR050084">
    <property type="entry name" value="NADPH_dep_7-cyano-7-deazaG_red"/>
</dbReference>
<dbReference type="InterPro" id="IPR029500">
    <property type="entry name" value="QueF"/>
</dbReference>
<dbReference type="InterPro" id="IPR016856">
    <property type="entry name" value="QueF_type1"/>
</dbReference>
<dbReference type="NCBIfam" id="TIGR03139">
    <property type="entry name" value="QueF-II"/>
    <property type="match status" value="1"/>
</dbReference>
<dbReference type="PANTHER" id="PTHR34354">
    <property type="entry name" value="NADPH-DEPENDENT 7-CYANO-7-DEAZAGUANINE REDUCTASE"/>
    <property type="match status" value="1"/>
</dbReference>
<dbReference type="PANTHER" id="PTHR34354:SF1">
    <property type="entry name" value="NADPH-DEPENDENT 7-CYANO-7-DEAZAGUANINE REDUCTASE"/>
    <property type="match status" value="1"/>
</dbReference>
<dbReference type="Pfam" id="PF14489">
    <property type="entry name" value="QueF"/>
    <property type="match status" value="1"/>
</dbReference>
<dbReference type="PIRSF" id="PIRSF027377">
    <property type="entry name" value="Nitrile_oxidored_QueF"/>
    <property type="match status" value="1"/>
</dbReference>
<dbReference type="SUPFAM" id="SSF55620">
    <property type="entry name" value="Tetrahydrobiopterin biosynthesis enzymes-like"/>
    <property type="match status" value="1"/>
</dbReference>
<name>QUEF_HELPH</name>
<gene>
    <name evidence="1" type="primary">queF</name>
    <name type="ordered locus">HPAG1_1339</name>
</gene>
<proteinExistence type="inferred from homology"/>
<sequence length="148" mass="17082">MTPELNLKSLGAKTTYIFEYNSQLLEAFPNPNPNLDPLITLECKEFTSLCPITSQPDFGVIFIRYIPKDKMVESKSLKLYLFSYRNHGSFHESCINTILLDLVKLLEPKYLEVYGDFASRGGIAIKPFVNYAIKEYQEFKEKRLLNAK</sequence>
<keyword id="KW-0963">Cytoplasm</keyword>
<keyword id="KW-0521">NADP</keyword>
<keyword id="KW-0560">Oxidoreductase</keyword>
<keyword id="KW-0671">Queuosine biosynthesis</keyword>
<comment type="function">
    <text evidence="1">Catalyzes the NADPH-dependent reduction of 7-cyano-7-deazaguanine (preQ0) to 7-aminomethyl-7-deazaguanine (preQ1).</text>
</comment>
<comment type="catalytic activity">
    <reaction evidence="1">
        <text>7-aminomethyl-7-carbaguanine + 2 NADP(+) = 7-cyano-7-deazaguanine + 2 NADPH + 3 H(+)</text>
        <dbReference type="Rhea" id="RHEA:13409"/>
        <dbReference type="ChEBI" id="CHEBI:15378"/>
        <dbReference type="ChEBI" id="CHEBI:45075"/>
        <dbReference type="ChEBI" id="CHEBI:57783"/>
        <dbReference type="ChEBI" id="CHEBI:58349"/>
        <dbReference type="ChEBI" id="CHEBI:58703"/>
        <dbReference type="EC" id="1.7.1.13"/>
    </reaction>
</comment>
<comment type="pathway">
    <text evidence="1">tRNA modification; tRNA-queuosine biosynthesis.</text>
</comment>
<comment type="subcellular location">
    <subcellularLocation>
        <location evidence="1">Cytoplasm</location>
    </subcellularLocation>
</comment>
<comment type="similarity">
    <text evidence="1">Belongs to the GTP cyclohydrolase I family. QueF type 1 subfamily.</text>
</comment>